<evidence type="ECO:0000250" key="1"/>
<evidence type="ECO:0000269" key="2">
    <source>
    </source>
</evidence>
<evidence type="ECO:0000269" key="3">
    <source>
    </source>
</evidence>
<evidence type="ECO:0000305" key="4"/>
<evidence type="ECO:0007829" key="5">
    <source>
        <dbReference type="PDB" id="3LL9"/>
    </source>
</evidence>
<comment type="function">
    <text evidence="2">Catalyzes the formation of isopentenyl diphosphate (IPP), the building block of all isoprenoids. Has lower activity with dimethylallyl phosphate (DMAP) and isopentenyl thiolophosphate (ISP). Has low activity with 1-butyl phosphate (BP) and 3-buten-1-yl phosphate (BEP). Has no significant activity with geranyl phosphate (in vitro).</text>
</comment>
<comment type="catalytic activity">
    <reaction evidence="2">
        <text>isopentenyl phosphate + ATP = isopentenyl diphosphate + ADP</text>
        <dbReference type="Rhea" id="RHEA:33963"/>
        <dbReference type="ChEBI" id="CHEBI:30616"/>
        <dbReference type="ChEBI" id="CHEBI:65078"/>
        <dbReference type="ChEBI" id="CHEBI:128769"/>
        <dbReference type="ChEBI" id="CHEBI:456216"/>
        <dbReference type="EC" id="2.7.4.26"/>
    </reaction>
</comment>
<comment type="biophysicochemical properties">
    <kinetics>
        <KM evidence="2">12.7 uM for isopentenyl phosphate</KM>
        <KM evidence="2">13.4 uM for ATP</KM>
    </kinetics>
    <phDependence>
        <text evidence="2">Optimum pH is 6.8-9.7.</text>
    </phDependence>
    <temperatureDependence>
        <text evidence="2">Optimum temperature is 70 degrees Celsius, but the enzyme is not stable above 50 degrees Celsius.</text>
    </temperatureDependence>
</comment>
<comment type="subunit">
    <text evidence="2 3">Homodimer.</text>
</comment>
<comment type="similarity">
    <text evidence="4">Belongs to the isopentenyl phosphate kinase family.</text>
</comment>
<organism>
    <name type="scientific">Methanothermobacter thermautotrophicus (strain ATCC 29096 / DSM 1053 / JCM 10044 / NBRC 100330 / Delta H)</name>
    <name type="common">Methanobacterium thermoautotrophicum</name>
    <dbReference type="NCBI Taxonomy" id="187420"/>
    <lineage>
        <taxon>Archaea</taxon>
        <taxon>Methanobacteriati</taxon>
        <taxon>Methanobacteriota</taxon>
        <taxon>Methanomada group</taxon>
        <taxon>Methanobacteria</taxon>
        <taxon>Methanobacteriales</taxon>
        <taxon>Methanobacteriaceae</taxon>
        <taxon>Methanothermobacter</taxon>
    </lineage>
</organism>
<reference key="1">
    <citation type="journal article" date="1997" name="J. Bacteriol.">
        <title>Complete genome sequence of Methanobacterium thermoautotrophicum deltaH: functional analysis and comparative genomics.</title>
        <authorList>
            <person name="Smith D.R."/>
            <person name="Doucette-Stamm L.A."/>
            <person name="Deloughery C."/>
            <person name="Lee H.-M."/>
            <person name="Dubois J."/>
            <person name="Aldredge T."/>
            <person name="Bashirzadeh R."/>
            <person name="Blakely D."/>
            <person name="Cook R."/>
            <person name="Gilbert K."/>
            <person name="Harrison D."/>
            <person name="Hoang L."/>
            <person name="Keagle P."/>
            <person name="Lumm W."/>
            <person name="Pothier B."/>
            <person name="Qiu D."/>
            <person name="Spadafora R."/>
            <person name="Vicare R."/>
            <person name="Wang Y."/>
            <person name="Wierzbowski J."/>
            <person name="Gibson R."/>
            <person name="Jiwani N."/>
            <person name="Caruso A."/>
            <person name="Bush D."/>
            <person name="Safer H."/>
            <person name="Patwell D."/>
            <person name="Prabhakar S."/>
            <person name="McDougall S."/>
            <person name="Shimer G."/>
            <person name="Goyal A."/>
            <person name="Pietrovski S."/>
            <person name="Church G.M."/>
            <person name="Daniels C.J."/>
            <person name="Mao J.-I."/>
            <person name="Rice P."/>
            <person name="Noelling J."/>
            <person name="Reeve J.N."/>
        </authorList>
    </citation>
    <scope>NUCLEOTIDE SEQUENCE [LARGE SCALE GENOMIC DNA]</scope>
    <source>
        <strain>ATCC 29096 / DSM 1053 / JCM 10044 / NBRC 100330 / Delta H</strain>
    </source>
</reference>
<reference key="2">
    <citation type="journal article" date="2010" name="Biochemistry">
        <title>Characterization of thermophilic archaeal isopentenyl phosphate kinases.</title>
        <authorList>
            <person name="Chen M."/>
            <person name="Poulter C.D."/>
        </authorList>
    </citation>
    <scope>CATALYTIC ACTIVITY</scope>
    <scope>FUNCTION</scope>
    <scope>BIOPHYSICOCHEMICAL PROPERTIES</scope>
    <scope>SUBUNIT</scope>
    <scope>IDENTIFICATION BY MASS SPECTROMETRY</scope>
    <source>
        <strain>ATCC 29096 / DSM 1053 / JCM 10044 / NBRC 100330 / Delta H</strain>
    </source>
</reference>
<reference key="3">
    <citation type="journal article" date="2010" name="ACS Chem. Biol.">
        <title>X-ray structures of isopentenyl phosphate kinase.</title>
        <authorList>
            <person name="Mabanglo M.F."/>
            <person name="Schubert H.L."/>
            <person name="Chen M."/>
            <person name="Hill C.P."/>
            <person name="Poulter C.D."/>
        </authorList>
    </citation>
    <scope>X-RAY CRYSTALLOGRAPHY (2.15 ANGSTROMS) IN COMPLEX WITH ADP</scope>
    <scope>SUBUNIT</scope>
</reference>
<dbReference type="EC" id="2.7.4.26"/>
<dbReference type="EMBL" id="AE000666">
    <property type="protein sequence ID" value="AAB84554.1"/>
    <property type="molecule type" value="Genomic_DNA"/>
</dbReference>
<dbReference type="PIR" id="E69161">
    <property type="entry name" value="E69161"/>
</dbReference>
<dbReference type="RefSeq" id="WP_010875687.1">
    <property type="nucleotide sequence ID" value="NC_000916.1"/>
</dbReference>
<dbReference type="PDB" id="3LL9">
    <property type="method" value="X-ray"/>
    <property type="resolution" value="2.15 A"/>
    <property type="chains" value="A/B=1-266"/>
</dbReference>
<dbReference type="PDBsum" id="3LL9"/>
<dbReference type="SMR" id="O26153"/>
<dbReference type="FunCoup" id="O26153">
    <property type="interactions" value="33"/>
</dbReference>
<dbReference type="STRING" id="187420.MTH_47"/>
<dbReference type="PaxDb" id="187420-MTH_47"/>
<dbReference type="EnsemblBacteria" id="AAB84554">
    <property type="protein sequence ID" value="AAB84554"/>
    <property type="gene ID" value="MTH_47"/>
</dbReference>
<dbReference type="KEGG" id="mth:MTH_47"/>
<dbReference type="PATRIC" id="fig|187420.15.peg.45"/>
<dbReference type="HOGENOM" id="CLU_070213_0_0_2"/>
<dbReference type="InParanoid" id="O26153"/>
<dbReference type="BRENDA" id="2.7.4.26">
    <property type="organism ID" value="3256"/>
</dbReference>
<dbReference type="EvolutionaryTrace" id="O26153"/>
<dbReference type="Proteomes" id="UP000005223">
    <property type="component" value="Chromosome"/>
</dbReference>
<dbReference type="GO" id="GO:0005829">
    <property type="term" value="C:cytosol"/>
    <property type="evidence" value="ECO:0007669"/>
    <property type="project" value="TreeGrafter"/>
</dbReference>
<dbReference type="GO" id="GO:0005524">
    <property type="term" value="F:ATP binding"/>
    <property type="evidence" value="ECO:0007669"/>
    <property type="project" value="UniProtKB-KW"/>
</dbReference>
<dbReference type="GO" id="GO:0102043">
    <property type="term" value="F:isopentenyl phosphate kinase activity"/>
    <property type="evidence" value="ECO:0007669"/>
    <property type="project" value="UniProtKB-EC"/>
</dbReference>
<dbReference type="GO" id="GO:0016301">
    <property type="term" value="F:kinase activity"/>
    <property type="evidence" value="ECO:0007669"/>
    <property type="project" value="UniProtKB-KW"/>
</dbReference>
<dbReference type="GO" id="GO:0016114">
    <property type="term" value="P:terpenoid biosynthetic process"/>
    <property type="evidence" value="ECO:0007669"/>
    <property type="project" value="TreeGrafter"/>
</dbReference>
<dbReference type="CDD" id="cd04241">
    <property type="entry name" value="AAK_FomA-like"/>
    <property type="match status" value="1"/>
</dbReference>
<dbReference type="Gene3D" id="3.40.1160.10">
    <property type="entry name" value="Acetylglutamate kinase-like"/>
    <property type="match status" value="1"/>
</dbReference>
<dbReference type="InterPro" id="IPR036393">
    <property type="entry name" value="AceGlu_kinase-like_sf"/>
</dbReference>
<dbReference type="InterPro" id="IPR001048">
    <property type="entry name" value="Asp/Glu/Uridylate_kinase"/>
</dbReference>
<dbReference type="InterPro" id="IPR024192">
    <property type="entry name" value="Fosfomycin_R_FomA-type"/>
</dbReference>
<dbReference type="NCBIfam" id="NF040647">
    <property type="entry name" value="IPPK_Arch"/>
    <property type="match status" value="1"/>
</dbReference>
<dbReference type="PANTHER" id="PTHR43654">
    <property type="entry name" value="GLUTAMATE 5-KINASE"/>
    <property type="match status" value="1"/>
</dbReference>
<dbReference type="PANTHER" id="PTHR43654:SF1">
    <property type="entry name" value="ISOPENTENYL PHOSPHATE KINASE"/>
    <property type="match status" value="1"/>
</dbReference>
<dbReference type="Pfam" id="PF00696">
    <property type="entry name" value="AA_kinase"/>
    <property type="match status" value="1"/>
</dbReference>
<dbReference type="PIRSF" id="PIRSF016496">
    <property type="entry name" value="Kin_FomA"/>
    <property type="match status" value="1"/>
</dbReference>
<dbReference type="SUPFAM" id="SSF53633">
    <property type="entry name" value="Carbamate kinase-like"/>
    <property type="match status" value="1"/>
</dbReference>
<proteinExistence type="evidence at protein level"/>
<accession>O26153</accession>
<gene>
    <name type="ordered locus">MTH_47</name>
</gene>
<sequence>MIILKLGGSVITRKDSEEPAIDRDNLERIASEIGNASPSSLMIVHGAGSFGHPFAGEYRIGSEIENEEDLRRRRFGFALTQNWVKKLNSHVCDALLAEGIPAVSMQPSAFIRAHAGRISHADISLIRSYLEEGMVPVVYGDVVLDSDRRLKFSVISGDQLINHFSLRLMPERVILGTDVDGVYTRNPKKHPDARLLDVIGSLDDLESLDGTLNTDVTGGMVGKIRELLLLAEKGVESEIINAAVPGNIERALLGEEVRGTRITGKH</sequence>
<feature type="chain" id="PRO_0000424201" description="Isopentenyl phosphate kinase">
    <location>
        <begin position="1"/>
        <end position="266"/>
    </location>
</feature>
<feature type="binding site">
    <location>
        <begin position="5"/>
        <end position="9"/>
    </location>
    <ligand>
        <name>ATP</name>
        <dbReference type="ChEBI" id="CHEBI:30616"/>
    </ligand>
</feature>
<feature type="binding site" evidence="1">
    <location>
        <position position="47"/>
    </location>
    <ligand>
        <name>substrate</name>
    </ligand>
</feature>
<feature type="binding site" evidence="1">
    <location>
        <position position="48"/>
    </location>
    <ligand>
        <name>ATP</name>
        <dbReference type="ChEBI" id="CHEBI:30616"/>
    </ligand>
</feature>
<feature type="binding site" evidence="1">
    <location>
        <position position="52"/>
    </location>
    <ligand>
        <name>substrate</name>
    </ligand>
</feature>
<feature type="binding site" evidence="1">
    <location>
        <position position="157"/>
    </location>
    <ligand>
        <name>substrate</name>
    </ligand>
</feature>
<feature type="binding site">
    <location>
        <position position="178"/>
    </location>
    <ligand>
        <name>ATP</name>
        <dbReference type="ChEBI" id="CHEBI:30616"/>
    </ligand>
</feature>
<feature type="binding site">
    <location>
        <begin position="183"/>
        <end position="188"/>
    </location>
    <ligand>
        <name>ATP</name>
        <dbReference type="ChEBI" id="CHEBI:30616"/>
    </ligand>
</feature>
<feature type="binding site">
    <location>
        <position position="219"/>
    </location>
    <ligand>
        <name>ATP</name>
        <dbReference type="ChEBI" id="CHEBI:30616"/>
    </ligand>
</feature>
<feature type="binding site">
    <location>
        <position position="223"/>
    </location>
    <ligand>
        <name>ATP</name>
        <dbReference type="ChEBI" id="CHEBI:30616"/>
    </ligand>
</feature>
<feature type="site" description="Transition state stabilizer" evidence="1">
    <location>
        <position position="14"/>
    </location>
</feature>
<feature type="strand" evidence="5">
    <location>
        <begin position="2"/>
        <end position="6"/>
    </location>
</feature>
<feature type="helix" evidence="5">
    <location>
        <begin position="8"/>
        <end position="11"/>
    </location>
</feature>
<feature type="strand" evidence="5">
    <location>
        <begin position="16"/>
        <end position="18"/>
    </location>
</feature>
<feature type="helix" evidence="5">
    <location>
        <begin position="23"/>
        <end position="36"/>
    </location>
</feature>
<feature type="strand" evidence="5">
    <location>
        <begin position="39"/>
        <end position="45"/>
    </location>
</feature>
<feature type="helix" evidence="5">
    <location>
        <begin position="48"/>
        <end position="50"/>
    </location>
</feature>
<feature type="helix" evidence="5">
    <location>
        <begin position="52"/>
        <end position="57"/>
    </location>
</feature>
<feature type="turn" evidence="5">
    <location>
        <begin position="58"/>
        <end position="61"/>
    </location>
</feature>
<feature type="helix" evidence="5">
    <location>
        <begin position="67"/>
        <end position="97"/>
    </location>
</feature>
<feature type="strand" evidence="5">
    <location>
        <begin position="102"/>
        <end position="104"/>
    </location>
</feature>
<feature type="helix" evidence="5">
    <location>
        <begin position="107"/>
        <end position="109"/>
    </location>
</feature>
<feature type="strand" evidence="5">
    <location>
        <begin position="111"/>
        <end position="114"/>
    </location>
</feature>
<feature type="strand" evidence="5">
    <location>
        <begin position="117"/>
        <end position="121"/>
    </location>
</feature>
<feature type="helix" evidence="5">
    <location>
        <begin position="124"/>
        <end position="131"/>
    </location>
</feature>
<feature type="strand" evidence="5">
    <location>
        <begin position="135"/>
        <end position="139"/>
    </location>
</feature>
<feature type="strand" evidence="5">
    <location>
        <begin position="141"/>
        <end position="146"/>
    </location>
</feature>
<feature type="turn" evidence="5">
    <location>
        <begin position="148"/>
        <end position="150"/>
    </location>
</feature>
<feature type="strand" evidence="5">
    <location>
        <begin position="151"/>
        <end position="155"/>
    </location>
</feature>
<feature type="helix" evidence="5">
    <location>
        <begin position="157"/>
        <end position="168"/>
    </location>
</feature>
<feature type="strand" evidence="5">
    <location>
        <begin position="171"/>
        <end position="181"/>
    </location>
</feature>
<feature type="strand" evidence="5">
    <location>
        <begin position="183"/>
        <end position="185"/>
    </location>
</feature>
<feature type="turn" evidence="5">
    <location>
        <begin position="187"/>
        <end position="189"/>
    </location>
</feature>
<feature type="helix" evidence="5">
    <location>
        <begin position="222"/>
        <end position="232"/>
    </location>
</feature>
<feature type="strand" evidence="5">
    <location>
        <begin position="237"/>
        <end position="244"/>
    </location>
</feature>
<feature type="helix" evidence="5">
    <location>
        <begin position="247"/>
        <end position="253"/>
    </location>
</feature>
<feature type="strand" evidence="5">
    <location>
        <begin position="258"/>
        <end position="261"/>
    </location>
</feature>
<keyword id="KW-0002">3D-structure</keyword>
<keyword id="KW-0067">ATP-binding</keyword>
<keyword id="KW-0414">Isoprene biosynthesis</keyword>
<keyword id="KW-0418">Kinase</keyword>
<keyword id="KW-0547">Nucleotide-binding</keyword>
<keyword id="KW-1185">Reference proteome</keyword>
<keyword id="KW-0808">Transferase</keyword>
<protein>
    <recommendedName>
        <fullName>Isopentenyl phosphate kinase</fullName>
        <shortName>IPK</shortName>
        <ecNumber>2.7.4.26</ecNumber>
    </recommendedName>
</protein>
<name>IPK_METTH</name>